<sequence>MKSYLKNISIFVFTILLLSNVSLGLNVSTTNNNSNFELNNSLIYKLNNSLTNTTNNSGSIIINNTTDTNKEKNECYLNITINGYRVIVKTNGEVFGFANKTPLKFIKIGDNEYIISPIVLNVPIEIYSKFNDKILHRTVILNYTKPEKEKKETNIKKEELHYLNVSFNNFKLIVKTNGKPYAKYLDLNIKVKTKKIKKHEYLVYPLILNKTIIIYAKFKNETLNRTIFLNYSIEENTTTNKTVILKNVYFPSEKIVIKTNFKPHTAYIVTPNNKIIHLKVHKKGKFYILSTKLKKNVILGNYSVVVDGIKKTFAVDYYKINAKLIDNRFIVGNVSYYVKEPKFITCIVDKKEINISLINGAFEIPLDYLIPKLNISKPEKIKKIILICGNAKEKIKVKFKNKEEIKKLISYDPVNKEIIIKLEGSEKEIKKLLKRYEKRKKYKISKIVKIYNYSIVEIKLKADKEILKDYNLPENILNTTEIVKKISSNKIRVEVNNKVDGVWYRFSCKIPKGYRVKEIVGDDGRVIRNNISINRLTGEVIGEVRWYIENNTLYFYDDPIYGYDISLIPPAPNHSIAVELSYNGQDYGGCGQISAIVFPYNKEDDETTVATYDHAGRTGDYNYANNIDAYAGSKIAIKYTSGALTRQYGVLGTAGSLGWWTYYYLSEINRTDIPLNTVPNGILESVIITDMYAPWNNNELNITQKVIIRGNNKWFATIYYIKNPTTKTYTNLKFFQGMDWNFRGSWWGDDAYYNSIDDVVYGYDSNAPVGDIQYGGFKSNIPSYEHDVNLYWSTWSDIRYDNLNNDSSYEGDAGTALAWTKDSLKPGEIWVVPIIWGLGYNYTDMMNEINMGLSQLYDTGVKSIDYPNNGDSFNPNIGPIIYINSTIALYGLVDAYNLNVSINITQINGTYIYTNSTLINLSVPYEEEKLVSFPVNISNMPYGAYNITIKTNLPNDQNTSNDEKSIIIYITSFSVQPNYQEKTGNVGEEIFYNITLYNFGVGGRFDINITYLTKGWTTKIYNNSILIAEDANGDGIWDYINPNYDLNSNNLPDIYVPTGEINLTVSKTIPSTAPLGEIDTTTLKFVNINNPSIFGKTTFQTSTPYPPSVQKTFYLHGDTLRTLNTSIPTTINNYTTINSNSLASWIQYPRFADNFTVVGKIPILLYINDPNVIFGTEMHKIVVSLMATNGIDSFTLGSDVEYLYLDDTIKSYIFNITLDSIITIPKNYYLVLRVENQISSNSINIYHNSTYPSNITLNTTTYVNVYNIFSDKNVYLPNENVTIFANITDPIGSYDISGANITVYYPNGSVYINSSMLLQEIDKNSPSLWKLYNYSFSLPESGKYLITITGIESNGVISKKNYTIYCGYEIQGYVKEDFGTLGKEDSEDKGIYGVNVSLLEDSNNDGIPDIGDTIVNSTTTDIFGHYSFLVYNSSKTYFVVVNSRTVGTTRGLNPQYSKNDIWAEETYQTVYTPINSSQWIANGNASIFPDKLLLTTDDYGEAGSVWYYKPVNLSEDLVVEFYAYLGDNPDGADGITFTLQSLGTNELGGTGGDLGYGGISPSVAVEVDTWLNDFDAPATTDHIAIDVNGNINHTYNSLTYPTPNPYDLGNVEDGREHLIKIVWNATTKTLQVYFDGNLSLTWNKDITQIIGNSAYFGFTGGTGGAKNLQYVKPIYVKNGDGYIINPTYGVVEMFGGRDPNEEDNWEDGKYEHYCLINLNSYSGKNITFGFSFDVITNTKSTGQGSFSQFIKNANAIYGKDESYFRIPNIDAKNGNHYIYTSGNKILDNLTIVNGSTQINGTIILSGLQWIANGNAYINNSNNLTLILTPDDYNQKGSVWYYKPVNLSEDLVVEFYAYLGDNPDGADGITFTLQSLGTNELGGTGGDLGYGGISPSVAVEVDTWLNDFDSPATTDHIAIDVDGNLNHTYNSLTYSTPNPYDLGNVEDGREHLIKIVWNATTKTLQVYFDGNLALTWNKDITQIIGNSTYFGFTGGTGGAKNLQYVKPTYVKNGDNVLNLEEISPNPIIDNVGADTYIGNIFFENVSVGILGNETGLNNLTLKSCGIYGKILNAGVKLVDYDWSLQNYPLYIDNLTINASGGYGISMLNKIWAMLYNSQISLKNGVGIYWANWAGGFGNITIYNITISSCNQGLVLYKDGNGIKLINSQIKNSVYEGVYSKNSTLEILNSSIINNSIGIYANISSILVNNSLIYKNRYEGLLLENSSSSILNSNIMNNSIGIYLKENYISKIQKSNISYNAYGIEIVNSSNVYINSSNIFNASTDGIAIFNGENVSVENSLLYNNNYSILSYGNLSNLSVLNSLLRDSINNSIDIEVPSDGFLNNLKLYNSSVLNSGSYGLFIYSLGSASNVNISKSLINGSYKDGIYIYGVNAINIVNNNITNNGLIGGDPAGSGIKISGNYTKGVLILNNNISHNLGNGISLEGLWSRTLCDVKVENNIISNNGIEENSGNGIYIGGRVENVSIFNNTIQYSDAQAILIQEANGWNSWDWIGTNISIINNTIQYNGLTVTIGNITAGITVGAYGVYNQDNGYIIIEGNKIINNNLCPNPTYGGKVGGIEVYGLNESWISLEFNISKNIIANNSAYGILIGASKDINIINNTIFNNEKGITIPNWDFVPYNIIISKNSIYNNSLLGIDLDDDNVTLNDGLLNYNEANHGIDYPIITYAELNGDNLTVKGYIGNGTGSSNFANAVVEIYLVKNLSGGDNLIGNNISSDGTVLNDTYGESWIYLGSLIADSNGFFSGTINVSGKGVGDESLLTATATIKGIGTSEFGRNYLLIKKFFNITGTIVMLPNGYNITIKSYNTTRDVYVYWYKPDNIEVINISGDYDENGTYGNTYWFKFNVINANETMNISITTNITTVEGLIIGIDPKK</sequence>
<gene>
    <name type="ordered locus">MJ1396</name>
</gene>
<comment type="subcellular location">
    <subcellularLocation>
        <location evidence="2">Membrane</location>
        <topology evidence="2">Single-pass membrane protein</topology>
    </subcellularLocation>
</comment>
<organism>
    <name type="scientific">Methanocaldococcus jannaschii (strain ATCC 43067 / DSM 2661 / JAL-1 / JCM 10045 / NBRC 100440)</name>
    <name type="common">Methanococcus jannaschii</name>
    <dbReference type="NCBI Taxonomy" id="243232"/>
    <lineage>
        <taxon>Archaea</taxon>
        <taxon>Methanobacteriati</taxon>
        <taxon>Methanobacteriota</taxon>
        <taxon>Methanomada group</taxon>
        <taxon>Methanococci</taxon>
        <taxon>Methanococcales</taxon>
        <taxon>Methanocaldococcaceae</taxon>
        <taxon>Methanocaldococcus</taxon>
    </lineage>
</organism>
<feature type="chain" id="PRO_0000107311" description="Uncharacterized protein MJ1396">
    <location>
        <begin position="1"/>
        <end position="2894"/>
    </location>
</feature>
<feature type="transmembrane region" description="Helical" evidence="1">
    <location>
        <begin position="8"/>
        <end position="28"/>
    </location>
</feature>
<feature type="repeat" description="PbH1 1">
    <location>
        <begin position="543"/>
        <end position="567"/>
    </location>
</feature>
<feature type="repeat" description="PbH1 2">
    <location>
        <begin position="2085"/>
        <end position="2107"/>
    </location>
</feature>
<feature type="repeat" description="PbH1 3">
    <location>
        <begin position="2135"/>
        <end position="2156"/>
    </location>
</feature>
<feature type="repeat" description="PbH1 4">
    <location>
        <begin position="2158"/>
        <end position="2180"/>
    </location>
</feature>
<feature type="repeat" description="PbH1 5">
    <location>
        <begin position="2201"/>
        <end position="2223"/>
    </location>
</feature>
<feature type="repeat" description="PbH1 6">
    <location>
        <begin position="2224"/>
        <end position="2244"/>
    </location>
</feature>
<feature type="repeat" description="PbH1 7">
    <location>
        <begin position="2245"/>
        <end position="2266"/>
    </location>
</feature>
<feature type="repeat" description="PbH1 8">
    <location>
        <begin position="2267"/>
        <end position="2289"/>
    </location>
</feature>
<feature type="repeat" description="PbH1 9">
    <location>
        <begin position="2290"/>
        <end position="2311"/>
    </location>
</feature>
<feature type="repeat" description="PbH1 10">
    <location>
        <begin position="2341"/>
        <end position="2363"/>
    </location>
</feature>
<feature type="repeat" description="PbH1 11">
    <location>
        <begin position="2367"/>
        <end position="2389"/>
    </location>
</feature>
<feature type="repeat" description="PbH1 12">
    <location>
        <begin position="2390"/>
        <end position="2419"/>
    </location>
</feature>
<feature type="repeat" description="PbH1 13">
    <location>
        <begin position="2422"/>
        <end position="2444"/>
    </location>
</feature>
<feature type="repeat" description="PbH1 14">
    <location>
        <begin position="2455"/>
        <end position="2477"/>
    </location>
</feature>
<feature type="repeat" description="PbH1 15">
    <location>
        <begin position="2479"/>
        <end position="2501"/>
    </location>
</feature>
<feature type="repeat" description="PbH1 16">
    <location>
        <begin position="2512"/>
        <end position="2542"/>
    </location>
</feature>
<feature type="repeat" description="PbH1 17">
    <location>
        <begin position="2550"/>
        <end position="2582"/>
    </location>
</feature>
<feature type="repeat" description="PbH1 18">
    <location>
        <begin position="2589"/>
        <end position="2611"/>
    </location>
</feature>
<feature type="repeat" description="PbH1 19">
    <location>
        <begin position="2612"/>
        <end position="2633"/>
    </location>
</feature>
<feature type="repeat" description="PbH1 20">
    <location>
        <begin position="2638"/>
        <end position="2660"/>
    </location>
</feature>
<feature type="helix" evidence="3">
    <location>
        <begin position="1476"/>
        <end position="1478"/>
    </location>
</feature>
<feature type="strand" evidence="3">
    <location>
        <begin position="1479"/>
        <end position="1483"/>
    </location>
</feature>
<feature type="strand" evidence="3">
    <location>
        <begin position="1492"/>
        <end position="1495"/>
    </location>
</feature>
<feature type="strand" evidence="4">
    <location>
        <begin position="1497"/>
        <end position="1500"/>
    </location>
</feature>
<feature type="strand" evidence="3">
    <location>
        <begin position="1502"/>
        <end position="1509"/>
    </location>
</feature>
<feature type="strand" evidence="3">
    <location>
        <begin position="1517"/>
        <end position="1524"/>
    </location>
</feature>
<feature type="strand" evidence="3">
    <location>
        <begin position="1534"/>
        <end position="1542"/>
    </location>
</feature>
<feature type="helix" evidence="3">
    <location>
        <begin position="1551"/>
        <end position="1553"/>
    </location>
</feature>
<feature type="turn" evidence="3">
    <location>
        <begin position="1554"/>
        <end position="1558"/>
    </location>
</feature>
<feature type="strand" evidence="3">
    <location>
        <begin position="1561"/>
        <end position="1568"/>
    </location>
</feature>
<feature type="helix" evidence="3">
    <location>
        <begin position="1573"/>
        <end position="1575"/>
    </location>
</feature>
<feature type="strand" evidence="3">
    <location>
        <begin position="1580"/>
        <end position="1587"/>
    </location>
</feature>
<feature type="helix" evidence="3">
    <location>
        <begin position="1593"/>
        <end position="1599"/>
    </location>
</feature>
<feature type="strand" evidence="3">
    <location>
        <begin position="1613"/>
        <end position="1624"/>
    </location>
</feature>
<feature type="turn" evidence="3">
    <location>
        <begin position="1625"/>
        <end position="1628"/>
    </location>
</feature>
<feature type="strand" evidence="3">
    <location>
        <begin position="1629"/>
        <end position="1634"/>
    </location>
</feature>
<feature type="strand" evidence="3">
    <location>
        <begin position="1637"/>
        <end position="1642"/>
    </location>
</feature>
<feature type="helix" evidence="3">
    <location>
        <begin position="1647"/>
        <end position="1650"/>
    </location>
</feature>
<feature type="strand" evidence="3">
    <location>
        <begin position="1652"/>
        <end position="1661"/>
    </location>
</feature>
<feature type="strand" evidence="3">
    <location>
        <begin position="1663"/>
        <end position="1665"/>
    </location>
</feature>
<feature type="strand" evidence="3">
    <location>
        <begin position="1669"/>
        <end position="1678"/>
    </location>
</feature>
<keyword id="KW-0002">3D-structure</keyword>
<keyword id="KW-0472">Membrane</keyword>
<keyword id="KW-1185">Reference proteome</keyword>
<keyword id="KW-0677">Repeat</keyword>
<keyword id="KW-0812">Transmembrane</keyword>
<keyword id="KW-1133">Transmembrane helix</keyword>
<reference key="1">
    <citation type="journal article" date="1996" name="Science">
        <title>Complete genome sequence of the methanogenic archaeon, Methanococcus jannaschii.</title>
        <authorList>
            <person name="Bult C.J."/>
            <person name="White O."/>
            <person name="Olsen G.J."/>
            <person name="Zhou L."/>
            <person name="Fleischmann R.D."/>
            <person name="Sutton G.G."/>
            <person name="Blake J.A."/>
            <person name="FitzGerald L.M."/>
            <person name="Clayton R.A."/>
            <person name="Gocayne J.D."/>
            <person name="Kerlavage A.R."/>
            <person name="Dougherty B.A."/>
            <person name="Tomb J.-F."/>
            <person name="Adams M.D."/>
            <person name="Reich C.I."/>
            <person name="Overbeek R."/>
            <person name="Kirkness E.F."/>
            <person name="Weinstock K.G."/>
            <person name="Merrick J.M."/>
            <person name="Glodek A."/>
            <person name="Scott J.L."/>
            <person name="Geoghagen N.S.M."/>
            <person name="Weidman J.F."/>
            <person name="Fuhrmann J.L."/>
            <person name="Nguyen D."/>
            <person name="Utterback T.R."/>
            <person name="Kelley J.M."/>
            <person name="Peterson J.D."/>
            <person name="Sadow P.W."/>
            <person name="Hanna M.C."/>
            <person name="Cotton M.D."/>
            <person name="Roberts K.M."/>
            <person name="Hurst M.A."/>
            <person name="Kaine B.P."/>
            <person name="Borodovsky M."/>
            <person name="Klenk H.-P."/>
            <person name="Fraser C.M."/>
            <person name="Smith H.O."/>
            <person name="Woese C.R."/>
            <person name="Venter J.C."/>
        </authorList>
    </citation>
    <scope>NUCLEOTIDE SEQUENCE [LARGE SCALE GENOMIC DNA]</scope>
    <source>
        <strain>ATCC 43067 / DSM 2661 / JAL-1 / JCM 10045 / NBRC 100440</strain>
    </source>
</reference>
<evidence type="ECO:0000255" key="1"/>
<evidence type="ECO:0000305" key="2"/>
<evidence type="ECO:0007829" key="3">
    <source>
        <dbReference type="PDB" id="7ELV"/>
    </source>
</evidence>
<evidence type="ECO:0007829" key="4">
    <source>
        <dbReference type="PDB" id="7EXO"/>
    </source>
</evidence>
<protein>
    <recommendedName>
        <fullName>Uncharacterized protein MJ1396</fullName>
    </recommendedName>
</protein>
<dbReference type="EMBL" id="L77117">
    <property type="protein sequence ID" value="AAB99406.1"/>
    <property type="molecule type" value="Genomic_DNA"/>
</dbReference>
<dbReference type="PIR" id="C64474">
    <property type="entry name" value="C64474"/>
</dbReference>
<dbReference type="RefSeq" id="WP_010870913.1">
    <property type="nucleotide sequence ID" value="NC_000909.1"/>
</dbReference>
<dbReference type="PDB" id="7ELV">
    <property type="method" value="X-ray"/>
    <property type="resolution" value="1.50 A"/>
    <property type="chains" value="E=1472-1679"/>
</dbReference>
<dbReference type="PDB" id="7EXO">
    <property type="method" value="X-ray"/>
    <property type="resolution" value="1.75 A"/>
    <property type="chains" value="A=1472-1679"/>
</dbReference>
<dbReference type="PDBsum" id="7ELV"/>
<dbReference type="PDBsum" id="7EXO"/>
<dbReference type="SMR" id="Q58791"/>
<dbReference type="FunCoup" id="Q58791">
    <property type="interactions" value="2"/>
</dbReference>
<dbReference type="STRING" id="243232.MJ_1396"/>
<dbReference type="UniLectin" id="Q58791"/>
<dbReference type="PaxDb" id="243232-MJ_1396"/>
<dbReference type="EnsemblBacteria" id="AAB99406">
    <property type="protein sequence ID" value="AAB99406"/>
    <property type="gene ID" value="MJ_1396"/>
</dbReference>
<dbReference type="GeneID" id="1452299"/>
<dbReference type="KEGG" id="mja:MJ_1396"/>
<dbReference type="eggNOG" id="arCOG02499">
    <property type="taxonomic scope" value="Archaea"/>
</dbReference>
<dbReference type="HOGENOM" id="CLU_228138_0_0_2"/>
<dbReference type="InParanoid" id="Q58791"/>
<dbReference type="OrthoDB" id="65980at2157"/>
<dbReference type="Proteomes" id="UP000000805">
    <property type="component" value="Chromosome"/>
</dbReference>
<dbReference type="GO" id="GO:0016020">
    <property type="term" value="C:membrane"/>
    <property type="evidence" value="ECO:0007669"/>
    <property type="project" value="UniProtKB-SubCell"/>
</dbReference>
<dbReference type="CDD" id="cd01951">
    <property type="entry name" value="lectin_L-type"/>
    <property type="match status" value="2"/>
</dbReference>
<dbReference type="Gene3D" id="2.60.120.200">
    <property type="match status" value="2"/>
</dbReference>
<dbReference type="Gene3D" id="2.160.20.10">
    <property type="entry name" value="Single-stranded right-handed beta-helix, Pectin lyase-like"/>
    <property type="match status" value="2"/>
</dbReference>
<dbReference type="InterPro" id="IPR039448">
    <property type="entry name" value="Beta_helix"/>
</dbReference>
<dbReference type="InterPro" id="IPR013320">
    <property type="entry name" value="ConA-like_dom_sf"/>
</dbReference>
<dbReference type="InterPro" id="IPR056573">
    <property type="entry name" value="Lectin_L-type_dom"/>
</dbReference>
<dbReference type="InterPro" id="IPR050258">
    <property type="entry name" value="Leguminous_Lectin"/>
</dbReference>
<dbReference type="InterPro" id="IPR006626">
    <property type="entry name" value="PbH1"/>
</dbReference>
<dbReference type="InterPro" id="IPR012334">
    <property type="entry name" value="Pectin_lyas_fold"/>
</dbReference>
<dbReference type="InterPro" id="IPR011050">
    <property type="entry name" value="Pectin_lyase_fold/virulence"/>
</dbReference>
<dbReference type="PANTHER" id="PTHR32401">
    <property type="entry name" value="CONCANAVALIN A-LIKE LECTIN FAMILY PROTEIN"/>
    <property type="match status" value="1"/>
</dbReference>
<dbReference type="PANTHER" id="PTHR32401:SF48">
    <property type="entry name" value="LEGUME LECTIN DOMAIN-CONTAINING PROTEIN"/>
    <property type="match status" value="1"/>
</dbReference>
<dbReference type="Pfam" id="PF13229">
    <property type="entry name" value="Beta_helix"/>
    <property type="match status" value="2"/>
</dbReference>
<dbReference type="Pfam" id="PF18483">
    <property type="entry name" value="Lectin_L-type_dom"/>
    <property type="match status" value="2"/>
</dbReference>
<dbReference type="SMART" id="SM00710">
    <property type="entry name" value="PbH1"/>
    <property type="match status" value="20"/>
</dbReference>
<dbReference type="SUPFAM" id="SSF49899">
    <property type="entry name" value="Concanavalin A-like lectins/glucanases"/>
    <property type="match status" value="2"/>
</dbReference>
<dbReference type="SUPFAM" id="SSF51126">
    <property type="entry name" value="Pectin lyase-like"/>
    <property type="match status" value="2"/>
</dbReference>
<accession>Q58791</accession>
<proteinExistence type="evidence at protein level"/>
<name>Y1396_METJA</name>